<dbReference type="EMBL" id="AL035602">
    <property type="protein sequence ID" value="CAB38282.1"/>
    <property type="status" value="ALT_SEQ"/>
    <property type="molecule type" value="Genomic_DNA"/>
</dbReference>
<dbReference type="EMBL" id="AL161571">
    <property type="protein sequence ID" value="CAB81420.1"/>
    <property type="status" value="ALT_SEQ"/>
    <property type="molecule type" value="Genomic_DNA"/>
</dbReference>
<dbReference type="EMBL" id="CP002687">
    <property type="protein sequence ID" value="AEE85383.1"/>
    <property type="molecule type" value="Genomic_DNA"/>
</dbReference>
<dbReference type="EMBL" id="AY050336">
    <property type="protein sequence ID" value="AAK91353.1"/>
    <property type="molecule type" value="mRNA"/>
</dbReference>
<dbReference type="EMBL" id="AY094039">
    <property type="protein sequence ID" value="AAM16195.1"/>
    <property type="molecule type" value="mRNA"/>
</dbReference>
<dbReference type="EMBL" id="AY085226">
    <property type="protein sequence ID" value="AAM62459.1"/>
    <property type="molecule type" value="mRNA"/>
</dbReference>
<dbReference type="PIR" id="T05875">
    <property type="entry name" value="T05875"/>
</dbReference>
<dbReference type="RefSeq" id="NP_567785.1">
    <property type="nucleotide sequence ID" value="NM_118909.3"/>
</dbReference>
<dbReference type="SMR" id="Q94A65"/>
<dbReference type="FunCoup" id="Q94A65">
    <property type="interactions" value="960"/>
</dbReference>
<dbReference type="STRING" id="3702.Q94A65"/>
<dbReference type="iPTMnet" id="Q94A65"/>
<dbReference type="PaxDb" id="3702-AT4G27700.1"/>
<dbReference type="ProteomicsDB" id="245224"/>
<dbReference type="EnsemblPlants" id="AT4G27700.1">
    <property type="protein sequence ID" value="AT4G27700.1"/>
    <property type="gene ID" value="AT4G27700"/>
</dbReference>
<dbReference type="GeneID" id="828884"/>
<dbReference type="Gramene" id="AT4G27700.1">
    <property type="protein sequence ID" value="AT4G27700.1"/>
    <property type="gene ID" value="AT4G27700"/>
</dbReference>
<dbReference type="KEGG" id="ath:AT4G27700"/>
<dbReference type="Araport" id="AT4G27700"/>
<dbReference type="TAIR" id="AT4G27700"/>
<dbReference type="eggNOG" id="KOG0017">
    <property type="taxonomic scope" value="Eukaryota"/>
</dbReference>
<dbReference type="HOGENOM" id="CLU_096247_0_0_1"/>
<dbReference type="InParanoid" id="Q94A65"/>
<dbReference type="OMA" id="EGGIYNW"/>
<dbReference type="OrthoDB" id="496335at2759"/>
<dbReference type="PhylomeDB" id="Q94A65"/>
<dbReference type="PRO" id="PR:Q94A65"/>
<dbReference type="Proteomes" id="UP000006548">
    <property type="component" value="Chromosome 4"/>
</dbReference>
<dbReference type="ExpressionAtlas" id="Q94A65">
    <property type="expression patterns" value="baseline and differential"/>
</dbReference>
<dbReference type="GO" id="GO:0009507">
    <property type="term" value="C:chloroplast"/>
    <property type="evidence" value="ECO:0007005"/>
    <property type="project" value="TAIR"/>
</dbReference>
<dbReference type="GO" id="GO:0009941">
    <property type="term" value="C:chloroplast envelope"/>
    <property type="evidence" value="ECO:0007005"/>
    <property type="project" value="TAIR"/>
</dbReference>
<dbReference type="GO" id="GO:0009534">
    <property type="term" value="C:chloroplast thylakoid"/>
    <property type="evidence" value="ECO:0007005"/>
    <property type="project" value="TAIR"/>
</dbReference>
<dbReference type="GO" id="GO:0009535">
    <property type="term" value="C:chloroplast thylakoid membrane"/>
    <property type="evidence" value="ECO:0007005"/>
    <property type="project" value="TAIR"/>
</dbReference>
<dbReference type="GO" id="GO:0005856">
    <property type="term" value="C:cytoskeleton"/>
    <property type="evidence" value="ECO:0007005"/>
    <property type="project" value="TAIR"/>
</dbReference>
<dbReference type="CDD" id="cd00158">
    <property type="entry name" value="RHOD"/>
    <property type="match status" value="1"/>
</dbReference>
<dbReference type="FunFam" id="3.40.250.10:FF:000032">
    <property type="entry name" value="Rhodanese-like domain-containing protein 14, chloroplastic"/>
    <property type="match status" value="1"/>
</dbReference>
<dbReference type="Gene3D" id="3.40.250.10">
    <property type="entry name" value="Rhodanese-like domain"/>
    <property type="match status" value="1"/>
</dbReference>
<dbReference type="InterPro" id="IPR001763">
    <property type="entry name" value="Rhodanese-like_dom"/>
</dbReference>
<dbReference type="InterPro" id="IPR036873">
    <property type="entry name" value="Rhodanese-like_dom_sf"/>
</dbReference>
<dbReference type="InterPro" id="IPR043186">
    <property type="entry name" value="Str14"/>
</dbReference>
<dbReference type="PANTHER" id="PTHR44920:SF1">
    <property type="entry name" value="RHODANESE-LIKE DOMAIN-CONTAINING PROTEIN 14, CHLOROPLASTIC"/>
    <property type="match status" value="1"/>
</dbReference>
<dbReference type="PANTHER" id="PTHR44920">
    <property type="entry name" value="RHODANESE-LIKE DOMAIN-CONTAINING PROTEIN 14, CHLOROPLASTIC-RELATED"/>
    <property type="match status" value="1"/>
</dbReference>
<dbReference type="Pfam" id="PF00581">
    <property type="entry name" value="Rhodanese"/>
    <property type="match status" value="1"/>
</dbReference>
<dbReference type="SMART" id="SM00450">
    <property type="entry name" value="RHOD"/>
    <property type="match status" value="1"/>
</dbReference>
<dbReference type="SUPFAM" id="SSF52821">
    <property type="entry name" value="Rhodanese/Cell cycle control phosphatase"/>
    <property type="match status" value="1"/>
</dbReference>
<dbReference type="PROSITE" id="PS50206">
    <property type="entry name" value="RHODANESE_3"/>
    <property type="match status" value="1"/>
</dbReference>
<organism>
    <name type="scientific">Arabidopsis thaliana</name>
    <name type="common">Mouse-ear cress</name>
    <dbReference type="NCBI Taxonomy" id="3702"/>
    <lineage>
        <taxon>Eukaryota</taxon>
        <taxon>Viridiplantae</taxon>
        <taxon>Streptophyta</taxon>
        <taxon>Embryophyta</taxon>
        <taxon>Tracheophyta</taxon>
        <taxon>Spermatophyta</taxon>
        <taxon>Magnoliopsida</taxon>
        <taxon>eudicotyledons</taxon>
        <taxon>Gunneridae</taxon>
        <taxon>Pentapetalae</taxon>
        <taxon>rosids</taxon>
        <taxon>malvids</taxon>
        <taxon>Brassicales</taxon>
        <taxon>Brassicaceae</taxon>
        <taxon>Camelineae</taxon>
        <taxon>Arabidopsis</taxon>
    </lineage>
</organism>
<keyword id="KW-0150">Chloroplast</keyword>
<keyword id="KW-0934">Plastid</keyword>
<keyword id="KW-1185">Reference proteome</keyword>
<keyword id="KW-0809">Transit peptide</keyword>
<accession>Q94A65</accession>
<accession>Q8LEU5</accession>
<accession>Q9T092</accession>
<comment type="subcellular location">
    <subcellularLocation>
        <location evidence="2">Plastid</location>
        <location evidence="2">Chloroplast</location>
    </subcellularLocation>
</comment>
<comment type="sequence caution" evidence="3">
    <conflict type="erroneous gene model prediction">
        <sequence resource="EMBL-CDS" id="CAB38282"/>
    </conflict>
</comment>
<comment type="sequence caution" evidence="3">
    <conflict type="erroneous gene model prediction">
        <sequence resource="EMBL-CDS" id="CAB81420"/>
    </conflict>
</comment>
<name>STR14_ARATH</name>
<reference key="1">
    <citation type="journal article" date="1999" name="Nature">
        <title>Sequence and analysis of chromosome 4 of the plant Arabidopsis thaliana.</title>
        <authorList>
            <person name="Mayer K.F.X."/>
            <person name="Schueller C."/>
            <person name="Wambutt R."/>
            <person name="Murphy G."/>
            <person name="Volckaert G."/>
            <person name="Pohl T."/>
            <person name="Duesterhoeft A."/>
            <person name="Stiekema W."/>
            <person name="Entian K.-D."/>
            <person name="Terryn N."/>
            <person name="Harris B."/>
            <person name="Ansorge W."/>
            <person name="Brandt P."/>
            <person name="Grivell L.A."/>
            <person name="Rieger M."/>
            <person name="Weichselgartner M."/>
            <person name="de Simone V."/>
            <person name="Obermaier B."/>
            <person name="Mache R."/>
            <person name="Mueller M."/>
            <person name="Kreis M."/>
            <person name="Delseny M."/>
            <person name="Puigdomenech P."/>
            <person name="Watson M."/>
            <person name="Schmidtheini T."/>
            <person name="Reichert B."/>
            <person name="Portetelle D."/>
            <person name="Perez-Alonso M."/>
            <person name="Boutry M."/>
            <person name="Bancroft I."/>
            <person name="Vos P."/>
            <person name="Hoheisel J."/>
            <person name="Zimmermann W."/>
            <person name="Wedler H."/>
            <person name="Ridley P."/>
            <person name="Langham S.-A."/>
            <person name="McCullagh B."/>
            <person name="Bilham L."/>
            <person name="Robben J."/>
            <person name="van der Schueren J."/>
            <person name="Grymonprez B."/>
            <person name="Chuang Y.-J."/>
            <person name="Vandenbussche F."/>
            <person name="Braeken M."/>
            <person name="Weltjens I."/>
            <person name="Voet M."/>
            <person name="Bastiaens I."/>
            <person name="Aert R."/>
            <person name="Defoor E."/>
            <person name="Weitzenegger T."/>
            <person name="Bothe G."/>
            <person name="Ramsperger U."/>
            <person name="Hilbert H."/>
            <person name="Braun M."/>
            <person name="Holzer E."/>
            <person name="Brandt A."/>
            <person name="Peters S."/>
            <person name="van Staveren M."/>
            <person name="Dirkse W."/>
            <person name="Mooijman P."/>
            <person name="Klein Lankhorst R."/>
            <person name="Rose M."/>
            <person name="Hauf J."/>
            <person name="Koetter P."/>
            <person name="Berneiser S."/>
            <person name="Hempel S."/>
            <person name="Feldpausch M."/>
            <person name="Lamberth S."/>
            <person name="Van den Daele H."/>
            <person name="De Keyser A."/>
            <person name="Buysshaert C."/>
            <person name="Gielen J."/>
            <person name="Villarroel R."/>
            <person name="De Clercq R."/>
            <person name="van Montagu M."/>
            <person name="Rogers J."/>
            <person name="Cronin A."/>
            <person name="Quail M.A."/>
            <person name="Bray-Allen S."/>
            <person name="Clark L."/>
            <person name="Doggett J."/>
            <person name="Hall S."/>
            <person name="Kay M."/>
            <person name="Lennard N."/>
            <person name="McLay K."/>
            <person name="Mayes R."/>
            <person name="Pettett A."/>
            <person name="Rajandream M.A."/>
            <person name="Lyne M."/>
            <person name="Benes V."/>
            <person name="Rechmann S."/>
            <person name="Borkova D."/>
            <person name="Bloecker H."/>
            <person name="Scharfe M."/>
            <person name="Grimm M."/>
            <person name="Loehnert T.-H."/>
            <person name="Dose S."/>
            <person name="de Haan M."/>
            <person name="Maarse A.C."/>
            <person name="Schaefer M."/>
            <person name="Mueller-Auer S."/>
            <person name="Gabel C."/>
            <person name="Fuchs M."/>
            <person name="Fartmann B."/>
            <person name="Granderath K."/>
            <person name="Dauner D."/>
            <person name="Herzl A."/>
            <person name="Neumann S."/>
            <person name="Argiriou A."/>
            <person name="Vitale D."/>
            <person name="Liguori R."/>
            <person name="Piravandi E."/>
            <person name="Massenet O."/>
            <person name="Quigley F."/>
            <person name="Clabauld G."/>
            <person name="Muendlein A."/>
            <person name="Felber R."/>
            <person name="Schnabl S."/>
            <person name="Hiller R."/>
            <person name="Schmidt W."/>
            <person name="Lecharny A."/>
            <person name="Aubourg S."/>
            <person name="Chefdor F."/>
            <person name="Cooke R."/>
            <person name="Berger C."/>
            <person name="Monfort A."/>
            <person name="Casacuberta E."/>
            <person name="Gibbons T."/>
            <person name="Weber N."/>
            <person name="Vandenbol M."/>
            <person name="Bargues M."/>
            <person name="Terol J."/>
            <person name="Torres A."/>
            <person name="Perez-Perez A."/>
            <person name="Purnelle B."/>
            <person name="Bent E."/>
            <person name="Johnson S."/>
            <person name="Tacon D."/>
            <person name="Jesse T."/>
            <person name="Heijnen L."/>
            <person name="Schwarz S."/>
            <person name="Scholler P."/>
            <person name="Heber S."/>
            <person name="Francs P."/>
            <person name="Bielke C."/>
            <person name="Frishman D."/>
            <person name="Haase D."/>
            <person name="Lemcke K."/>
            <person name="Mewes H.-W."/>
            <person name="Stocker S."/>
            <person name="Zaccaria P."/>
            <person name="Bevan M."/>
            <person name="Wilson R.K."/>
            <person name="de la Bastide M."/>
            <person name="Habermann K."/>
            <person name="Parnell L."/>
            <person name="Dedhia N."/>
            <person name="Gnoj L."/>
            <person name="Schutz K."/>
            <person name="Huang E."/>
            <person name="Spiegel L."/>
            <person name="Sekhon M."/>
            <person name="Murray J."/>
            <person name="Sheet P."/>
            <person name="Cordes M."/>
            <person name="Abu-Threideh J."/>
            <person name="Stoneking T."/>
            <person name="Kalicki J."/>
            <person name="Graves T."/>
            <person name="Harmon G."/>
            <person name="Edwards J."/>
            <person name="Latreille P."/>
            <person name="Courtney L."/>
            <person name="Cloud J."/>
            <person name="Abbott A."/>
            <person name="Scott K."/>
            <person name="Johnson D."/>
            <person name="Minx P."/>
            <person name="Bentley D."/>
            <person name="Fulton B."/>
            <person name="Miller N."/>
            <person name="Greco T."/>
            <person name="Kemp K."/>
            <person name="Kramer J."/>
            <person name="Fulton L."/>
            <person name="Mardis E."/>
            <person name="Dante M."/>
            <person name="Pepin K."/>
            <person name="Hillier L.W."/>
            <person name="Nelson J."/>
            <person name="Spieth J."/>
            <person name="Ryan E."/>
            <person name="Andrews S."/>
            <person name="Geisel C."/>
            <person name="Layman D."/>
            <person name="Du H."/>
            <person name="Ali J."/>
            <person name="Berghoff A."/>
            <person name="Jones K."/>
            <person name="Drone K."/>
            <person name="Cotton M."/>
            <person name="Joshu C."/>
            <person name="Antonoiu B."/>
            <person name="Zidanic M."/>
            <person name="Strong C."/>
            <person name="Sun H."/>
            <person name="Lamar B."/>
            <person name="Yordan C."/>
            <person name="Ma P."/>
            <person name="Zhong J."/>
            <person name="Preston R."/>
            <person name="Vil D."/>
            <person name="Shekher M."/>
            <person name="Matero A."/>
            <person name="Shah R."/>
            <person name="Swaby I.K."/>
            <person name="O'Shaughnessy A."/>
            <person name="Rodriguez M."/>
            <person name="Hoffman J."/>
            <person name="Till S."/>
            <person name="Granat S."/>
            <person name="Shohdy N."/>
            <person name="Hasegawa A."/>
            <person name="Hameed A."/>
            <person name="Lodhi M."/>
            <person name="Johnson A."/>
            <person name="Chen E."/>
            <person name="Marra M.A."/>
            <person name="Martienssen R."/>
            <person name="McCombie W.R."/>
        </authorList>
    </citation>
    <scope>NUCLEOTIDE SEQUENCE [LARGE SCALE GENOMIC DNA]</scope>
    <source>
        <strain>cv. Columbia</strain>
    </source>
</reference>
<reference key="2">
    <citation type="journal article" date="2017" name="Plant J.">
        <title>Araport11: a complete reannotation of the Arabidopsis thaliana reference genome.</title>
        <authorList>
            <person name="Cheng C.Y."/>
            <person name="Krishnakumar V."/>
            <person name="Chan A.P."/>
            <person name="Thibaud-Nissen F."/>
            <person name="Schobel S."/>
            <person name="Town C.D."/>
        </authorList>
    </citation>
    <scope>GENOME REANNOTATION</scope>
    <source>
        <strain>cv. Columbia</strain>
    </source>
</reference>
<reference key="3">
    <citation type="journal article" date="2003" name="Science">
        <title>Empirical analysis of transcriptional activity in the Arabidopsis genome.</title>
        <authorList>
            <person name="Yamada K."/>
            <person name="Lim J."/>
            <person name="Dale J.M."/>
            <person name="Chen H."/>
            <person name="Shinn P."/>
            <person name="Palm C.J."/>
            <person name="Southwick A.M."/>
            <person name="Wu H.C."/>
            <person name="Kim C.J."/>
            <person name="Nguyen M."/>
            <person name="Pham P.K."/>
            <person name="Cheuk R.F."/>
            <person name="Karlin-Newmann G."/>
            <person name="Liu S.X."/>
            <person name="Lam B."/>
            <person name="Sakano H."/>
            <person name="Wu T."/>
            <person name="Yu G."/>
            <person name="Miranda M."/>
            <person name="Quach H.L."/>
            <person name="Tripp M."/>
            <person name="Chang C.H."/>
            <person name="Lee J.M."/>
            <person name="Toriumi M.J."/>
            <person name="Chan M.M."/>
            <person name="Tang C.C."/>
            <person name="Onodera C.S."/>
            <person name="Deng J.M."/>
            <person name="Akiyama K."/>
            <person name="Ansari Y."/>
            <person name="Arakawa T."/>
            <person name="Banh J."/>
            <person name="Banno F."/>
            <person name="Bowser L."/>
            <person name="Brooks S.Y."/>
            <person name="Carninci P."/>
            <person name="Chao Q."/>
            <person name="Choy N."/>
            <person name="Enju A."/>
            <person name="Goldsmith A.D."/>
            <person name="Gurjal M."/>
            <person name="Hansen N.F."/>
            <person name="Hayashizaki Y."/>
            <person name="Johnson-Hopson C."/>
            <person name="Hsuan V.W."/>
            <person name="Iida K."/>
            <person name="Karnes M."/>
            <person name="Khan S."/>
            <person name="Koesema E."/>
            <person name="Ishida J."/>
            <person name="Jiang P.X."/>
            <person name="Jones T."/>
            <person name="Kawai J."/>
            <person name="Kamiya A."/>
            <person name="Meyers C."/>
            <person name="Nakajima M."/>
            <person name="Narusaka M."/>
            <person name="Seki M."/>
            <person name="Sakurai T."/>
            <person name="Satou M."/>
            <person name="Tamse R."/>
            <person name="Vaysberg M."/>
            <person name="Wallender E.K."/>
            <person name="Wong C."/>
            <person name="Yamamura Y."/>
            <person name="Yuan S."/>
            <person name="Shinozaki K."/>
            <person name="Davis R.W."/>
            <person name="Theologis A."/>
            <person name="Ecker J.R."/>
        </authorList>
    </citation>
    <scope>NUCLEOTIDE SEQUENCE [LARGE SCALE MRNA]</scope>
    <source>
        <strain>cv. Columbia</strain>
    </source>
</reference>
<reference key="4">
    <citation type="submission" date="2002-03" db="EMBL/GenBank/DDBJ databases">
        <title>Full-length cDNA from Arabidopsis thaliana.</title>
        <authorList>
            <person name="Brover V.V."/>
            <person name="Troukhan M.E."/>
            <person name="Alexandrov N.A."/>
            <person name="Lu Y.-P."/>
            <person name="Flavell R.B."/>
            <person name="Feldmann K.A."/>
        </authorList>
    </citation>
    <scope>NUCLEOTIDE SEQUENCE [LARGE SCALE MRNA]</scope>
</reference>
<reference key="5">
    <citation type="journal article" date="2004" name="Plant Physiol.">
        <title>Intracellular localization of Arabidopsis sulfurtransferases.</title>
        <authorList>
            <person name="Bauer M."/>
            <person name="Dietrich C."/>
            <person name="Nowak K."/>
            <person name="Sierralta W.D."/>
            <person name="Papenbrock J."/>
        </authorList>
    </citation>
    <scope>SUBCELLULAR LOCATION</scope>
</reference>
<reference key="6">
    <citation type="journal article" date="2007" name="Plant Physiol. Biochem.">
        <title>Differential expression of Arabidopsis sulfurtransferases under various growth conditions.</title>
        <authorList>
            <person name="Bartels A."/>
            <person name="Mock H.P."/>
            <person name="Papenbrock J."/>
        </authorList>
    </citation>
    <scope>GENE FAMILY</scope>
    <scope>NOMENCLATURE</scope>
</reference>
<proteinExistence type="evidence at transcript level"/>
<feature type="transit peptide" description="Chloroplast" evidence="3">
    <location>
        <begin position="1"/>
        <end position="48"/>
    </location>
</feature>
<feature type="chain" id="PRO_0000416535" description="Rhodanese-like domain-containing protein 14, chloroplastic">
    <location>
        <begin position="49"/>
        <end position="224"/>
    </location>
</feature>
<feature type="domain" description="Rhodanese" evidence="1">
    <location>
        <begin position="87"/>
        <end position="220"/>
    </location>
</feature>
<feature type="active site" description="Cysteine persulfide intermediate" evidence="1">
    <location>
        <position position="166"/>
    </location>
</feature>
<feature type="sequence conflict" description="In Ref. 4; AAM62459." evidence="3" ref="4">
    <original>L</original>
    <variation>F</variation>
    <location>
        <position position="27"/>
    </location>
</feature>
<protein>
    <recommendedName>
        <fullName>Rhodanese-like domain-containing protein 14, chloroplastic</fullName>
    </recommendedName>
    <alternativeName>
        <fullName>Sulfurtransferase 14</fullName>
        <shortName>AtStr14</shortName>
    </alternativeName>
</protein>
<evidence type="ECO:0000255" key="1">
    <source>
        <dbReference type="PROSITE-ProRule" id="PRU00173"/>
    </source>
</evidence>
<evidence type="ECO:0000269" key="2">
    <source>
    </source>
</evidence>
<evidence type="ECO:0000305" key="3"/>
<sequence length="224" mass="24872">MASLTSIATPYPSSSQALRLKSSGNTLFSAGVRSAAMVSGHKTLKIQCTSTKPAKPAAEVDWRQKRELLLEKRVRSVDVKEAQRLQKENNFVILDVRPEAEYKAGHPPGAINVEMYRLIREWTAWDIARRLGFAFFGIFSGTEENPEFIQSVEAKLDKEAKIIVACSSAGTMKPTQNLPEGQQSRSLIAAYLLVLNGYKNVFHLEGGIYTWGKEGLPVETIEED</sequence>
<gene>
    <name type="ordered locus">At4g27700</name>
    <name type="ORF">T29A15.190</name>
</gene>